<protein>
    <recommendedName>
        <fullName evidence="1">DNA-directed RNA polymerase subunit alpha</fullName>
        <shortName evidence="1">RNAP subunit alpha</shortName>
        <ecNumber evidence="1">2.7.7.6</ecNumber>
    </recommendedName>
    <alternativeName>
        <fullName evidence="1">RNA polymerase subunit alpha</fullName>
    </alternativeName>
    <alternativeName>
        <fullName evidence="1">Transcriptase subunit alpha</fullName>
    </alternativeName>
</protein>
<accession>Q5L8D6</accession>
<evidence type="ECO:0000255" key="1">
    <source>
        <dbReference type="HAMAP-Rule" id="MF_00059"/>
    </source>
</evidence>
<keyword id="KW-0240">DNA-directed RNA polymerase</keyword>
<keyword id="KW-0548">Nucleotidyltransferase</keyword>
<keyword id="KW-0804">Transcription</keyword>
<keyword id="KW-0808">Transferase</keyword>
<proteinExistence type="inferred from homology"/>
<comment type="function">
    <text evidence="1">DNA-dependent RNA polymerase catalyzes the transcription of DNA into RNA using the four ribonucleoside triphosphates as substrates.</text>
</comment>
<comment type="catalytic activity">
    <reaction evidence="1">
        <text>RNA(n) + a ribonucleoside 5'-triphosphate = RNA(n+1) + diphosphate</text>
        <dbReference type="Rhea" id="RHEA:21248"/>
        <dbReference type="Rhea" id="RHEA-COMP:14527"/>
        <dbReference type="Rhea" id="RHEA-COMP:17342"/>
        <dbReference type="ChEBI" id="CHEBI:33019"/>
        <dbReference type="ChEBI" id="CHEBI:61557"/>
        <dbReference type="ChEBI" id="CHEBI:140395"/>
        <dbReference type="EC" id="2.7.7.6"/>
    </reaction>
</comment>
<comment type="subunit">
    <text evidence="1">Homodimer. The RNAP catalytic core consists of 2 alpha, 1 beta, 1 beta' and 1 omega subunit. When a sigma factor is associated with the core the holoenzyme is formed, which can initiate transcription.</text>
</comment>
<comment type="domain">
    <text evidence="1">The N-terminal domain is essential for RNAP assembly and basal transcription, whereas the C-terminal domain is involved in interaction with transcriptional regulators and with upstream promoter elements.</text>
</comment>
<comment type="similarity">
    <text evidence="1">Belongs to the RNA polymerase alpha chain family.</text>
</comment>
<gene>
    <name evidence="1" type="primary">rpoA</name>
    <name type="ordered locus">BF3976</name>
</gene>
<feature type="chain" id="PRO_0000225258" description="DNA-directed RNA polymerase subunit alpha">
    <location>
        <begin position="1"/>
        <end position="330"/>
    </location>
</feature>
<feature type="region of interest" description="Alpha N-terminal domain (alpha-NTD)" evidence="1">
    <location>
        <begin position="1"/>
        <end position="232"/>
    </location>
</feature>
<feature type="region of interest" description="Alpha C-terminal domain (alpha-CTD)" evidence="1">
    <location>
        <begin position="248"/>
        <end position="330"/>
    </location>
</feature>
<sequence>MAILAFQKPDKVLMLEADAKFGKFEFRPLEPGFGITVGNALRRILLSSLEGFAITTIRIEGVEHEFSSVPGVKEDVTNIILNLKQVRFKQVVEEFESEKVSITIENSSEFKAGDIGKYLTGFEVLNPELVICHLDSKATMQIDITINKGRGYVPADENREYCTDVNVIPIDSIYTPIRNVKYAVENFRVEQKTDYEKLVLEITTDGSIHPKEALKEAAKILIYHFMLFSDEKITLESNDVDGNEEFDEEVLHMRQLLKTKLVDMDLSVRALNCLKAADVETLGDLVQFNKTDLLKFRNFGKKSLTELDDLLESLNLSFGTDISKYKLDKE</sequence>
<organism>
    <name type="scientific">Bacteroides fragilis (strain ATCC 25285 / DSM 2151 / CCUG 4856 / JCM 11019 / LMG 10263 / NCTC 9343 / Onslow / VPI 2553 / EN-2)</name>
    <dbReference type="NCBI Taxonomy" id="272559"/>
    <lineage>
        <taxon>Bacteria</taxon>
        <taxon>Pseudomonadati</taxon>
        <taxon>Bacteroidota</taxon>
        <taxon>Bacteroidia</taxon>
        <taxon>Bacteroidales</taxon>
        <taxon>Bacteroidaceae</taxon>
        <taxon>Bacteroides</taxon>
    </lineage>
</organism>
<reference key="1">
    <citation type="journal article" date="2005" name="Science">
        <title>Extensive DNA inversions in the B. fragilis genome control variable gene expression.</title>
        <authorList>
            <person name="Cerdeno-Tarraga A.-M."/>
            <person name="Patrick S."/>
            <person name="Crossman L.C."/>
            <person name="Blakely G."/>
            <person name="Abratt V."/>
            <person name="Lennard N."/>
            <person name="Poxton I."/>
            <person name="Duerden B."/>
            <person name="Harris B."/>
            <person name="Quail M.A."/>
            <person name="Barron A."/>
            <person name="Clark L."/>
            <person name="Corton C."/>
            <person name="Doggett J."/>
            <person name="Holden M.T.G."/>
            <person name="Larke N."/>
            <person name="Line A."/>
            <person name="Lord A."/>
            <person name="Norbertczak H."/>
            <person name="Ormond D."/>
            <person name="Price C."/>
            <person name="Rabbinowitsch E."/>
            <person name="Woodward J."/>
            <person name="Barrell B.G."/>
            <person name="Parkhill J."/>
        </authorList>
    </citation>
    <scope>NUCLEOTIDE SEQUENCE [LARGE SCALE GENOMIC DNA]</scope>
    <source>
        <strain>ATCC 25285 / DSM 2151 / CCUG 4856 / JCM 11019 / LMG 10263 / NCTC 9343 / Onslow / VPI 2553 / EN-2</strain>
    </source>
</reference>
<name>RPOA_BACFN</name>
<dbReference type="EC" id="2.7.7.6" evidence="1"/>
<dbReference type="EMBL" id="CR626927">
    <property type="protein sequence ID" value="CAH09652.1"/>
    <property type="molecule type" value="Genomic_DNA"/>
</dbReference>
<dbReference type="RefSeq" id="WP_005782229.1">
    <property type="nucleotide sequence ID" value="NZ_UFTH01000001.1"/>
</dbReference>
<dbReference type="SMR" id="Q5L8D6"/>
<dbReference type="PaxDb" id="272559-BF9343_3871"/>
<dbReference type="KEGG" id="bfs:BF9343_3871"/>
<dbReference type="eggNOG" id="COG0202">
    <property type="taxonomic scope" value="Bacteria"/>
</dbReference>
<dbReference type="HOGENOM" id="CLU_053084_0_1_10"/>
<dbReference type="Proteomes" id="UP000006731">
    <property type="component" value="Chromosome"/>
</dbReference>
<dbReference type="GO" id="GO:0005737">
    <property type="term" value="C:cytoplasm"/>
    <property type="evidence" value="ECO:0007669"/>
    <property type="project" value="UniProtKB-ARBA"/>
</dbReference>
<dbReference type="GO" id="GO:0000428">
    <property type="term" value="C:DNA-directed RNA polymerase complex"/>
    <property type="evidence" value="ECO:0007669"/>
    <property type="project" value="UniProtKB-KW"/>
</dbReference>
<dbReference type="GO" id="GO:0003677">
    <property type="term" value="F:DNA binding"/>
    <property type="evidence" value="ECO:0007669"/>
    <property type="project" value="UniProtKB-UniRule"/>
</dbReference>
<dbReference type="GO" id="GO:0003899">
    <property type="term" value="F:DNA-directed RNA polymerase activity"/>
    <property type="evidence" value="ECO:0007669"/>
    <property type="project" value="UniProtKB-UniRule"/>
</dbReference>
<dbReference type="GO" id="GO:0046983">
    <property type="term" value="F:protein dimerization activity"/>
    <property type="evidence" value="ECO:0007669"/>
    <property type="project" value="InterPro"/>
</dbReference>
<dbReference type="GO" id="GO:0006351">
    <property type="term" value="P:DNA-templated transcription"/>
    <property type="evidence" value="ECO:0007669"/>
    <property type="project" value="UniProtKB-UniRule"/>
</dbReference>
<dbReference type="CDD" id="cd06928">
    <property type="entry name" value="RNAP_alpha_NTD"/>
    <property type="match status" value="1"/>
</dbReference>
<dbReference type="FunFam" id="1.10.150.20:FF:000020">
    <property type="entry name" value="DNA-directed RNA polymerase subunit alpha"/>
    <property type="match status" value="1"/>
</dbReference>
<dbReference type="FunFam" id="2.170.120.12:FF:000001">
    <property type="entry name" value="DNA-directed RNA polymerase subunit alpha"/>
    <property type="match status" value="1"/>
</dbReference>
<dbReference type="Gene3D" id="1.10.150.20">
    <property type="entry name" value="5' to 3' exonuclease, C-terminal subdomain"/>
    <property type="match status" value="1"/>
</dbReference>
<dbReference type="Gene3D" id="2.170.120.12">
    <property type="entry name" value="DNA-directed RNA polymerase, insert domain"/>
    <property type="match status" value="1"/>
</dbReference>
<dbReference type="Gene3D" id="3.30.1360.10">
    <property type="entry name" value="RNA polymerase, RBP11-like subunit"/>
    <property type="match status" value="1"/>
</dbReference>
<dbReference type="HAMAP" id="MF_00059">
    <property type="entry name" value="RNApol_bact_RpoA"/>
    <property type="match status" value="1"/>
</dbReference>
<dbReference type="InterPro" id="IPR011262">
    <property type="entry name" value="DNA-dir_RNA_pol_insert"/>
</dbReference>
<dbReference type="InterPro" id="IPR011263">
    <property type="entry name" value="DNA-dir_RNA_pol_RpoA/D/Rpb3"/>
</dbReference>
<dbReference type="InterPro" id="IPR011773">
    <property type="entry name" value="DNA-dir_RpoA"/>
</dbReference>
<dbReference type="InterPro" id="IPR036603">
    <property type="entry name" value="RBP11-like"/>
</dbReference>
<dbReference type="InterPro" id="IPR011260">
    <property type="entry name" value="RNAP_asu_C"/>
</dbReference>
<dbReference type="InterPro" id="IPR036643">
    <property type="entry name" value="RNApol_insert_sf"/>
</dbReference>
<dbReference type="NCBIfam" id="NF003513">
    <property type="entry name" value="PRK05182.1-2"/>
    <property type="match status" value="1"/>
</dbReference>
<dbReference type="NCBIfam" id="NF003516">
    <property type="entry name" value="PRK05182.2-2"/>
    <property type="match status" value="1"/>
</dbReference>
<dbReference type="NCBIfam" id="NF003519">
    <property type="entry name" value="PRK05182.2-5"/>
    <property type="match status" value="1"/>
</dbReference>
<dbReference type="NCBIfam" id="TIGR02027">
    <property type="entry name" value="rpoA"/>
    <property type="match status" value="1"/>
</dbReference>
<dbReference type="Pfam" id="PF01000">
    <property type="entry name" value="RNA_pol_A_bac"/>
    <property type="match status" value="1"/>
</dbReference>
<dbReference type="Pfam" id="PF03118">
    <property type="entry name" value="RNA_pol_A_CTD"/>
    <property type="match status" value="1"/>
</dbReference>
<dbReference type="Pfam" id="PF01193">
    <property type="entry name" value="RNA_pol_L"/>
    <property type="match status" value="1"/>
</dbReference>
<dbReference type="SMART" id="SM00662">
    <property type="entry name" value="RPOLD"/>
    <property type="match status" value="1"/>
</dbReference>
<dbReference type="SUPFAM" id="SSF47789">
    <property type="entry name" value="C-terminal domain of RNA polymerase alpha subunit"/>
    <property type="match status" value="1"/>
</dbReference>
<dbReference type="SUPFAM" id="SSF56553">
    <property type="entry name" value="Insert subdomain of RNA polymerase alpha subunit"/>
    <property type="match status" value="1"/>
</dbReference>
<dbReference type="SUPFAM" id="SSF55257">
    <property type="entry name" value="RBP11-like subunits of RNA polymerase"/>
    <property type="match status" value="1"/>
</dbReference>